<reference key="1">
    <citation type="journal article" date="1987" name="J. Biol. Chem.">
        <title>Cloning and characterization of a 12-gene cluster from Bacillus subtilis encoding nine enzymes for de novo purine nucleotide synthesis.</title>
        <authorList>
            <person name="Ebbole D.J."/>
            <person name="Zalkin H."/>
        </authorList>
    </citation>
    <scope>NUCLEOTIDE SEQUENCE [GENOMIC DNA]</scope>
</reference>
<reference key="2">
    <citation type="journal article" date="1997" name="Nature">
        <title>The complete genome sequence of the Gram-positive bacterium Bacillus subtilis.</title>
        <authorList>
            <person name="Kunst F."/>
            <person name="Ogasawara N."/>
            <person name="Moszer I."/>
            <person name="Albertini A.M."/>
            <person name="Alloni G."/>
            <person name="Azevedo V."/>
            <person name="Bertero M.G."/>
            <person name="Bessieres P."/>
            <person name="Bolotin A."/>
            <person name="Borchert S."/>
            <person name="Borriss R."/>
            <person name="Boursier L."/>
            <person name="Brans A."/>
            <person name="Braun M."/>
            <person name="Brignell S.C."/>
            <person name="Bron S."/>
            <person name="Brouillet S."/>
            <person name="Bruschi C.V."/>
            <person name="Caldwell B."/>
            <person name="Capuano V."/>
            <person name="Carter N.M."/>
            <person name="Choi S.-K."/>
            <person name="Codani J.-J."/>
            <person name="Connerton I.F."/>
            <person name="Cummings N.J."/>
            <person name="Daniel R.A."/>
            <person name="Denizot F."/>
            <person name="Devine K.M."/>
            <person name="Duesterhoeft A."/>
            <person name="Ehrlich S.D."/>
            <person name="Emmerson P.T."/>
            <person name="Entian K.-D."/>
            <person name="Errington J."/>
            <person name="Fabret C."/>
            <person name="Ferrari E."/>
            <person name="Foulger D."/>
            <person name="Fritz C."/>
            <person name="Fujita M."/>
            <person name="Fujita Y."/>
            <person name="Fuma S."/>
            <person name="Galizzi A."/>
            <person name="Galleron N."/>
            <person name="Ghim S.-Y."/>
            <person name="Glaser P."/>
            <person name="Goffeau A."/>
            <person name="Golightly E.J."/>
            <person name="Grandi G."/>
            <person name="Guiseppi G."/>
            <person name="Guy B.J."/>
            <person name="Haga K."/>
            <person name="Haiech J."/>
            <person name="Harwood C.R."/>
            <person name="Henaut A."/>
            <person name="Hilbert H."/>
            <person name="Holsappel S."/>
            <person name="Hosono S."/>
            <person name="Hullo M.-F."/>
            <person name="Itaya M."/>
            <person name="Jones L.-M."/>
            <person name="Joris B."/>
            <person name="Karamata D."/>
            <person name="Kasahara Y."/>
            <person name="Klaerr-Blanchard M."/>
            <person name="Klein C."/>
            <person name="Kobayashi Y."/>
            <person name="Koetter P."/>
            <person name="Koningstein G."/>
            <person name="Krogh S."/>
            <person name="Kumano M."/>
            <person name="Kurita K."/>
            <person name="Lapidus A."/>
            <person name="Lardinois S."/>
            <person name="Lauber J."/>
            <person name="Lazarevic V."/>
            <person name="Lee S.-M."/>
            <person name="Levine A."/>
            <person name="Liu H."/>
            <person name="Masuda S."/>
            <person name="Mauel C."/>
            <person name="Medigue C."/>
            <person name="Medina N."/>
            <person name="Mellado R.P."/>
            <person name="Mizuno M."/>
            <person name="Moestl D."/>
            <person name="Nakai S."/>
            <person name="Noback M."/>
            <person name="Noone D."/>
            <person name="O'Reilly M."/>
            <person name="Ogawa K."/>
            <person name="Ogiwara A."/>
            <person name="Oudega B."/>
            <person name="Park S.-H."/>
            <person name="Parro V."/>
            <person name="Pohl T.M."/>
            <person name="Portetelle D."/>
            <person name="Porwollik S."/>
            <person name="Prescott A.M."/>
            <person name="Presecan E."/>
            <person name="Pujic P."/>
            <person name="Purnelle B."/>
            <person name="Rapoport G."/>
            <person name="Rey M."/>
            <person name="Reynolds S."/>
            <person name="Rieger M."/>
            <person name="Rivolta C."/>
            <person name="Rocha E."/>
            <person name="Roche B."/>
            <person name="Rose M."/>
            <person name="Sadaie Y."/>
            <person name="Sato T."/>
            <person name="Scanlan E."/>
            <person name="Schleich S."/>
            <person name="Schroeter R."/>
            <person name="Scoffone F."/>
            <person name="Sekiguchi J."/>
            <person name="Sekowska A."/>
            <person name="Seror S.J."/>
            <person name="Serror P."/>
            <person name="Shin B.-S."/>
            <person name="Soldo B."/>
            <person name="Sorokin A."/>
            <person name="Tacconi E."/>
            <person name="Takagi T."/>
            <person name="Takahashi H."/>
            <person name="Takemaru K."/>
            <person name="Takeuchi M."/>
            <person name="Tamakoshi A."/>
            <person name="Tanaka T."/>
            <person name="Terpstra P."/>
            <person name="Tognoni A."/>
            <person name="Tosato V."/>
            <person name="Uchiyama S."/>
            <person name="Vandenbol M."/>
            <person name="Vannier F."/>
            <person name="Vassarotti A."/>
            <person name="Viari A."/>
            <person name="Wambutt R."/>
            <person name="Wedler E."/>
            <person name="Wedler H."/>
            <person name="Weitzenegger T."/>
            <person name="Winters P."/>
            <person name="Wipat A."/>
            <person name="Yamamoto H."/>
            <person name="Yamane K."/>
            <person name="Yasumoto K."/>
            <person name="Yata K."/>
            <person name="Yoshida K."/>
            <person name="Yoshikawa H.-F."/>
            <person name="Zumstein E."/>
            <person name="Yoshikawa H."/>
            <person name="Danchin A."/>
        </authorList>
    </citation>
    <scope>NUCLEOTIDE SEQUENCE [LARGE SCALE GENOMIC DNA]</scope>
    <source>
        <strain>168</strain>
    </source>
</reference>
<reference key="3">
    <citation type="journal article" date="1997" name="Electrophoresis">
        <title>First steps from a two-dimensional protein index towards a response-regulation map for Bacillus subtilis.</title>
        <authorList>
            <person name="Antelmann H."/>
            <person name="Bernhardt J."/>
            <person name="Schmid R."/>
            <person name="Mach H."/>
            <person name="Voelker U."/>
            <person name="Hecker M."/>
        </authorList>
    </citation>
    <scope>PROTEIN SEQUENCE OF 1-14</scope>
    <source>
        <strain>168 / IS58</strain>
    </source>
</reference>
<evidence type="ECO:0000305" key="1"/>
<feature type="chain" id="PRO_0000100801" description="Phosphoribosylaminoimidazole-succinocarboxamide synthase">
    <location>
        <begin position="1"/>
        <end position="241"/>
    </location>
</feature>
<protein>
    <recommendedName>
        <fullName>Phosphoribosylaminoimidazole-succinocarboxamide synthase</fullName>
        <ecNumber>6.3.2.6</ecNumber>
    </recommendedName>
    <alternativeName>
        <fullName>SAICAR synthetase</fullName>
    </alternativeName>
    <alternativeName>
        <fullName>Vegetative protein 286A</fullName>
        <shortName>VEG286A</shortName>
    </alternativeName>
</protein>
<accession>P12046</accession>
<proteinExistence type="evidence at protein level"/>
<organism>
    <name type="scientific">Bacillus subtilis (strain 168)</name>
    <dbReference type="NCBI Taxonomy" id="224308"/>
    <lineage>
        <taxon>Bacteria</taxon>
        <taxon>Bacillati</taxon>
        <taxon>Bacillota</taxon>
        <taxon>Bacilli</taxon>
        <taxon>Bacillales</taxon>
        <taxon>Bacillaceae</taxon>
        <taxon>Bacillus</taxon>
    </lineage>
</organism>
<name>PUR7_BACSU</name>
<gene>
    <name type="primary">purC</name>
    <name type="ordered locus">BSU06450</name>
</gene>
<keyword id="KW-0067">ATP-binding</keyword>
<keyword id="KW-0903">Direct protein sequencing</keyword>
<keyword id="KW-0436">Ligase</keyword>
<keyword id="KW-0547">Nucleotide-binding</keyword>
<keyword id="KW-0658">Purine biosynthesis</keyword>
<keyword id="KW-1185">Reference proteome</keyword>
<comment type="catalytic activity">
    <reaction>
        <text>5-amino-1-(5-phospho-D-ribosyl)imidazole-4-carboxylate + L-aspartate + ATP = (2S)-2-[5-amino-1-(5-phospho-beta-D-ribosyl)imidazole-4-carboxamido]succinate + ADP + phosphate + 2 H(+)</text>
        <dbReference type="Rhea" id="RHEA:22628"/>
        <dbReference type="ChEBI" id="CHEBI:15378"/>
        <dbReference type="ChEBI" id="CHEBI:29991"/>
        <dbReference type="ChEBI" id="CHEBI:30616"/>
        <dbReference type="ChEBI" id="CHEBI:43474"/>
        <dbReference type="ChEBI" id="CHEBI:58443"/>
        <dbReference type="ChEBI" id="CHEBI:77657"/>
        <dbReference type="ChEBI" id="CHEBI:456216"/>
        <dbReference type="EC" id="6.3.2.6"/>
    </reaction>
</comment>
<comment type="pathway">
    <text>Purine metabolism; IMP biosynthesis via de novo pathway; 5-amino-1-(5-phospho-D-ribosyl)imidazole-4-carboxamide from 5-amino-1-(5-phospho-D-ribosyl)imidazole-4-carboxylate: step 1/2.</text>
</comment>
<comment type="similarity">
    <text evidence="1">Belongs to the SAICAR synthetase family.</text>
</comment>
<sequence length="241" mass="27460">MNIVKNELLYEGKAKKIYKTDDENTLYVVYKDSATAFNGEKKAEISGKGRLNNEISSLIFKHLHAKGINNHFIERISETEQLIKKVTIVPLEVVVRNVVAGSMSKRLGIPEGTELEQPIIEFYYKDDALGDPLITEDHIWLLKAATPEQVETIKSITTIVNEELQSIFDDCHVRLIDFKLEFGLDAEGQVLLADEISPDTCRLWDKETNEKLDKDLFRRNLGSLTDAYEEIFNRLGGIHHV</sequence>
<dbReference type="EC" id="6.3.2.6"/>
<dbReference type="EMBL" id="J02732">
    <property type="protein sequence ID" value="AAA22677.1"/>
    <property type="molecule type" value="Genomic_DNA"/>
</dbReference>
<dbReference type="EMBL" id="AL009126">
    <property type="protein sequence ID" value="CAB12465.1"/>
    <property type="molecule type" value="Genomic_DNA"/>
</dbReference>
<dbReference type="PIR" id="D29326">
    <property type="entry name" value="CEBSSC"/>
</dbReference>
<dbReference type="RefSeq" id="NP_388527.1">
    <property type="nucleotide sequence ID" value="NC_000964.3"/>
</dbReference>
<dbReference type="RefSeq" id="WP_003242871.1">
    <property type="nucleotide sequence ID" value="NZ_OZ025638.1"/>
</dbReference>
<dbReference type="SMR" id="P12046"/>
<dbReference type="FunCoup" id="P12046">
    <property type="interactions" value="609"/>
</dbReference>
<dbReference type="IntAct" id="P12046">
    <property type="interactions" value="1"/>
</dbReference>
<dbReference type="MINT" id="P12046"/>
<dbReference type="STRING" id="224308.BSU06450"/>
<dbReference type="PaxDb" id="224308-BSU06450"/>
<dbReference type="EnsemblBacteria" id="CAB12465">
    <property type="protein sequence ID" value="CAB12465"/>
    <property type="gene ID" value="BSU_06450"/>
</dbReference>
<dbReference type="GeneID" id="939389"/>
<dbReference type="KEGG" id="bsu:BSU06450"/>
<dbReference type="PATRIC" id="fig|224308.179.peg.701"/>
<dbReference type="eggNOG" id="COG0152">
    <property type="taxonomic scope" value="Bacteria"/>
</dbReference>
<dbReference type="InParanoid" id="P12046"/>
<dbReference type="OrthoDB" id="9801549at2"/>
<dbReference type="PhylomeDB" id="P12046"/>
<dbReference type="BioCyc" id="BSUB:BSU06450-MONOMER"/>
<dbReference type="UniPathway" id="UPA00074">
    <property type="reaction ID" value="UER00131"/>
</dbReference>
<dbReference type="Proteomes" id="UP000001570">
    <property type="component" value="Chromosome"/>
</dbReference>
<dbReference type="GO" id="GO:0005524">
    <property type="term" value="F:ATP binding"/>
    <property type="evidence" value="ECO:0007669"/>
    <property type="project" value="UniProtKB-KW"/>
</dbReference>
<dbReference type="GO" id="GO:0004639">
    <property type="term" value="F:phosphoribosylaminoimidazolesuccinocarboxamide synthase activity"/>
    <property type="evidence" value="ECO:0007669"/>
    <property type="project" value="UniProtKB-UniRule"/>
</dbReference>
<dbReference type="GO" id="GO:0006189">
    <property type="term" value="P:'de novo' IMP biosynthetic process"/>
    <property type="evidence" value="ECO:0007669"/>
    <property type="project" value="UniProtKB-UniRule"/>
</dbReference>
<dbReference type="GO" id="GO:0009236">
    <property type="term" value="P:cobalamin biosynthetic process"/>
    <property type="evidence" value="ECO:0007669"/>
    <property type="project" value="InterPro"/>
</dbReference>
<dbReference type="CDD" id="cd01415">
    <property type="entry name" value="SAICAR_synt_PurC"/>
    <property type="match status" value="1"/>
</dbReference>
<dbReference type="FunFam" id="3.30.200.20:FF:000189">
    <property type="entry name" value="Phosphoribosylaminoimidazole-succinocarboxamide synthase"/>
    <property type="match status" value="1"/>
</dbReference>
<dbReference type="FunFam" id="3.30.470.20:FF:000006">
    <property type="entry name" value="Phosphoribosylaminoimidazole-succinocarboxamide synthase"/>
    <property type="match status" value="1"/>
</dbReference>
<dbReference type="Gene3D" id="3.30.470.20">
    <property type="entry name" value="ATP-grasp fold, B domain"/>
    <property type="match status" value="1"/>
</dbReference>
<dbReference type="Gene3D" id="3.30.200.20">
    <property type="entry name" value="Phosphorylase Kinase, domain 1"/>
    <property type="match status" value="1"/>
</dbReference>
<dbReference type="HAMAP" id="MF_00137">
    <property type="entry name" value="SAICAR_synth"/>
    <property type="match status" value="1"/>
</dbReference>
<dbReference type="InterPro" id="IPR028923">
    <property type="entry name" value="SAICAR_synt/ADE2_N"/>
</dbReference>
<dbReference type="InterPro" id="IPR033934">
    <property type="entry name" value="SAICAR_synt_PurC"/>
</dbReference>
<dbReference type="InterPro" id="IPR001636">
    <property type="entry name" value="SAICAR_synth"/>
</dbReference>
<dbReference type="InterPro" id="IPR050089">
    <property type="entry name" value="SAICAR_synthetase"/>
</dbReference>
<dbReference type="InterPro" id="IPR018236">
    <property type="entry name" value="SAICAR_synthetase_CS"/>
</dbReference>
<dbReference type="NCBIfam" id="TIGR00081">
    <property type="entry name" value="purC"/>
    <property type="match status" value="1"/>
</dbReference>
<dbReference type="PANTHER" id="PTHR43599">
    <property type="entry name" value="MULTIFUNCTIONAL PROTEIN ADE2"/>
    <property type="match status" value="1"/>
</dbReference>
<dbReference type="PANTHER" id="PTHR43599:SF3">
    <property type="entry name" value="SI:DKEY-6E2.2"/>
    <property type="match status" value="1"/>
</dbReference>
<dbReference type="Pfam" id="PF01259">
    <property type="entry name" value="SAICAR_synt"/>
    <property type="match status" value="1"/>
</dbReference>
<dbReference type="SUPFAM" id="SSF56104">
    <property type="entry name" value="SAICAR synthase-like"/>
    <property type="match status" value="1"/>
</dbReference>
<dbReference type="PROSITE" id="PS01057">
    <property type="entry name" value="SAICAR_SYNTHETASE_1"/>
    <property type="match status" value="1"/>
</dbReference>
<dbReference type="PROSITE" id="PS01058">
    <property type="entry name" value="SAICAR_SYNTHETASE_2"/>
    <property type="match status" value="1"/>
</dbReference>